<accession>Q21IH3</accession>
<dbReference type="EC" id="3.6.5.n1" evidence="1"/>
<dbReference type="EMBL" id="CP000282">
    <property type="protein sequence ID" value="ABD81506.1"/>
    <property type="molecule type" value="Genomic_DNA"/>
</dbReference>
<dbReference type="RefSeq" id="WP_011468724.1">
    <property type="nucleotide sequence ID" value="NC_007912.1"/>
</dbReference>
<dbReference type="SMR" id="Q21IH3"/>
<dbReference type="STRING" id="203122.Sde_2246"/>
<dbReference type="GeneID" id="98613915"/>
<dbReference type="KEGG" id="sde:Sde_2246"/>
<dbReference type="eggNOG" id="COG0481">
    <property type="taxonomic scope" value="Bacteria"/>
</dbReference>
<dbReference type="HOGENOM" id="CLU_009995_3_3_6"/>
<dbReference type="OrthoDB" id="9801472at2"/>
<dbReference type="Proteomes" id="UP000001947">
    <property type="component" value="Chromosome"/>
</dbReference>
<dbReference type="GO" id="GO:0005886">
    <property type="term" value="C:plasma membrane"/>
    <property type="evidence" value="ECO:0007669"/>
    <property type="project" value="UniProtKB-SubCell"/>
</dbReference>
<dbReference type="GO" id="GO:0005525">
    <property type="term" value="F:GTP binding"/>
    <property type="evidence" value="ECO:0007669"/>
    <property type="project" value="UniProtKB-UniRule"/>
</dbReference>
<dbReference type="GO" id="GO:0003924">
    <property type="term" value="F:GTPase activity"/>
    <property type="evidence" value="ECO:0007669"/>
    <property type="project" value="UniProtKB-UniRule"/>
</dbReference>
<dbReference type="GO" id="GO:0097216">
    <property type="term" value="F:guanosine tetraphosphate binding"/>
    <property type="evidence" value="ECO:0007669"/>
    <property type="project" value="UniProtKB-ARBA"/>
</dbReference>
<dbReference type="GO" id="GO:0043022">
    <property type="term" value="F:ribosome binding"/>
    <property type="evidence" value="ECO:0007669"/>
    <property type="project" value="UniProtKB-UniRule"/>
</dbReference>
<dbReference type="GO" id="GO:0003746">
    <property type="term" value="F:translation elongation factor activity"/>
    <property type="evidence" value="ECO:0007669"/>
    <property type="project" value="UniProtKB-UniRule"/>
</dbReference>
<dbReference type="GO" id="GO:0045727">
    <property type="term" value="P:positive regulation of translation"/>
    <property type="evidence" value="ECO:0007669"/>
    <property type="project" value="UniProtKB-UniRule"/>
</dbReference>
<dbReference type="CDD" id="cd03699">
    <property type="entry name" value="EF4_II"/>
    <property type="match status" value="1"/>
</dbReference>
<dbReference type="CDD" id="cd16260">
    <property type="entry name" value="EF4_III"/>
    <property type="match status" value="1"/>
</dbReference>
<dbReference type="CDD" id="cd01890">
    <property type="entry name" value="LepA"/>
    <property type="match status" value="1"/>
</dbReference>
<dbReference type="CDD" id="cd03709">
    <property type="entry name" value="lepA_C"/>
    <property type="match status" value="1"/>
</dbReference>
<dbReference type="FunFam" id="3.40.50.300:FF:000078">
    <property type="entry name" value="Elongation factor 4"/>
    <property type="match status" value="1"/>
</dbReference>
<dbReference type="FunFam" id="2.40.30.10:FF:000015">
    <property type="entry name" value="Translation factor GUF1, mitochondrial"/>
    <property type="match status" value="1"/>
</dbReference>
<dbReference type="FunFam" id="3.30.70.240:FF:000007">
    <property type="entry name" value="Translation factor GUF1, mitochondrial"/>
    <property type="match status" value="1"/>
</dbReference>
<dbReference type="FunFam" id="3.30.70.2570:FF:000001">
    <property type="entry name" value="Translation factor GUF1, mitochondrial"/>
    <property type="match status" value="1"/>
</dbReference>
<dbReference type="FunFam" id="3.30.70.870:FF:000004">
    <property type="entry name" value="Translation factor GUF1, mitochondrial"/>
    <property type="match status" value="1"/>
</dbReference>
<dbReference type="Gene3D" id="3.30.70.240">
    <property type="match status" value="1"/>
</dbReference>
<dbReference type="Gene3D" id="3.30.70.2570">
    <property type="entry name" value="Elongation factor 4, C-terminal domain"/>
    <property type="match status" value="1"/>
</dbReference>
<dbReference type="Gene3D" id="3.30.70.870">
    <property type="entry name" value="Elongation Factor G (Translational Gtpase), domain 3"/>
    <property type="match status" value="1"/>
</dbReference>
<dbReference type="Gene3D" id="3.40.50.300">
    <property type="entry name" value="P-loop containing nucleotide triphosphate hydrolases"/>
    <property type="match status" value="1"/>
</dbReference>
<dbReference type="Gene3D" id="2.40.30.10">
    <property type="entry name" value="Translation factors"/>
    <property type="match status" value="1"/>
</dbReference>
<dbReference type="HAMAP" id="MF_00071">
    <property type="entry name" value="LepA"/>
    <property type="match status" value="1"/>
</dbReference>
<dbReference type="InterPro" id="IPR006297">
    <property type="entry name" value="EF-4"/>
</dbReference>
<dbReference type="InterPro" id="IPR035647">
    <property type="entry name" value="EFG_III/V"/>
</dbReference>
<dbReference type="InterPro" id="IPR000640">
    <property type="entry name" value="EFG_V-like"/>
</dbReference>
<dbReference type="InterPro" id="IPR031157">
    <property type="entry name" value="G_TR_CS"/>
</dbReference>
<dbReference type="InterPro" id="IPR038363">
    <property type="entry name" value="LepA_C_sf"/>
</dbReference>
<dbReference type="InterPro" id="IPR013842">
    <property type="entry name" value="LepA_CTD"/>
</dbReference>
<dbReference type="InterPro" id="IPR035654">
    <property type="entry name" value="LepA_IV"/>
</dbReference>
<dbReference type="InterPro" id="IPR027417">
    <property type="entry name" value="P-loop_NTPase"/>
</dbReference>
<dbReference type="InterPro" id="IPR005225">
    <property type="entry name" value="Small_GTP-bd"/>
</dbReference>
<dbReference type="InterPro" id="IPR000795">
    <property type="entry name" value="T_Tr_GTP-bd_dom"/>
</dbReference>
<dbReference type="InterPro" id="IPR009000">
    <property type="entry name" value="Transl_B-barrel_sf"/>
</dbReference>
<dbReference type="NCBIfam" id="TIGR01393">
    <property type="entry name" value="lepA"/>
    <property type="match status" value="1"/>
</dbReference>
<dbReference type="NCBIfam" id="TIGR00231">
    <property type="entry name" value="small_GTP"/>
    <property type="match status" value="1"/>
</dbReference>
<dbReference type="PANTHER" id="PTHR43512:SF4">
    <property type="entry name" value="TRANSLATION FACTOR GUF1 HOMOLOG, CHLOROPLASTIC"/>
    <property type="match status" value="1"/>
</dbReference>
<dbReference type="PANTHER" id="PTHR43512">
    <property type="entry name" value="TRANSLATION FACTOR GUF1-RELATED"/>
    <property type="match status" value="1"/>
</dbReference>
<dbReference type="Pfam" id="PF00679">
    <property type="entry name" value="EFG_C"/>
    <property type="match status" value="1"/>
</dbReference>
<dbReference type="Pfam" id="PF00009">
    <property type="entry name" value="GTP_EFTU"/>
    <property type="match status" value="1"/>
</dbReference>
<dbReference type="Pfam" id="PF06421">
    <property type="entry name" value="LepA_C"/>
    <property type="match status" value="1"/>
</dbReference>
<dbReference type="PRINTS" id="PR00315">
    <property type="entry name" value="ELONGATNFCT"/>
</dbReference>
<dbReference type="SUPFAM" id="SSF54980">
    <property type="entry name" value="EF-G C-terminal domain-like"/>
    <property type="match status" value="2"/>
</dbReference>
<dbReference type="SUPFAM" id="SSF52540">
    <property type="entry name" value="P-loop containing nucleoside triphosphate hydrolases"/>
    <property type="match status" value="1"/>
</dbReference>
<dbReference type="SUPFAM" id="SSF50447">
    <property type="entry name" value="Translation proteins"/>
    <property type="match status" value="1"/>
</dbReference>
<dbReference type="PROSITE" id="PS00301">
    <property type="entry name" value="G_TR_1"/>
    <property type="match status" value="1"/>
</dbReference>
<dbReference type="PROSITE" id="PS51722">
    <property type="entry name" value="G_TR_2"/>
    <property type="match status" value="1"/>
</dbReference>
<comment type="function">
    <text evidence="1">Required for accurate and efficient protein synthesis under certain stress conditions. May act as a fidelity factor of the translation reaction, by catalyzing a one-codon backward translocation of tRNAs on improperly translocated ribosomes. Back-translocation proceeds from a post-translocation (POST) complex to a pre-translocation (PRE) complex, thus giving elongation factor G a second chance to translocate the tRNAs correctly. Binds to ribosomes in a GTP-dependent manner.</text>
</comment>
<comment type="catalytic activity">
    <reaction evidence="1">
        <text>GTP + H2O = GDP + phosphate + H(+)</text>
        <dbReference type="Rhea" id="RHEA:19669"/>
        <dbReference type="ChEBI" id="CHEBI:15377"/>
        <dbReference type="ChEBI" id="CHEBI:15378"/>
        <dbReference type="ChEBI" id="CHEBI:37565"/>
        <dbReference type="ChEBI" id="CHEBI:43474"/>
        <dbReference type="ChEBI" id="CHEBI:58189"/>
        <dbReference type="EC" id="3.6.5.n1"/>
    </reaction>
</comment>
<comment type="subcellular location">
    <subcellularLocation>
        <location evidence="1">Cell inner membrane</location>
        <topology evidence="1">Peripheral membrane protein</topology>
        <orientation evidence="1">Cytoplasmic side</orientation>
    </subcellularLocation>
</comment>
<comment type="similarity">
    <text evidence="1">Belongs to the TRAFAC class translation factor GTPase superfamily. Classic translation factor GTPase family. LepA subfamily.</text>
</comment>
<protein>
    <recommendedName>
        <fullName evidence="1">Elongation factor 4</fullName>
        <shortName evidence="1">EF-4</shortName>
        <ecNumber evidence="1">3.6.5.n1</ecNumber>
    </recommendedName>
    <alternativeName>
        <fullName evidence="1">Ribosomal back-translocase LepA</fullName>
    </alternativeName>
</protein>
<sequence>MTDLSHIRNFSIIAHIDHGKSTLADRFIQHCGGLSAREMEAQVLDSMDIERERGITIKAQSVTLSYTSKSGKVYQLNFIDTPGHVDFSYEVSRSLAACEGALLVVDAAQGVEAQSVANCYTALDQGLEVIPVLNKIDLPQAEPERVASEIEDIIGIDATDAVRCSAKSGLGIEDVLEVLIKSVPAPVGDIDAPLQALIIDSWFDNYLGVVSLVRVTQGCLKTKDKIILKSLGKPHVVDMVGVFTPKRKETGILKAGEVGFVVAGIKEILGAPVGDTITHASTSTVPQLPGFKKVKPQVYAGLFPVSSDDYENFRDALGKLTLNDASLFYEPESSEALGFGFRCGFLGMLHMEIIQERLEREYDLDLITTAPTVIYEVEKNDGSVVYVDNPSKLPDLGTIAEMREPIVEANMLMPQAYLGAVITLCIEKRGVQKDMQYLGGQVALKYELPMAEVVLDFFDKLKSVSRGFASLDYNFVRFEAAKLVRLDVLINSEKVDALALIVHRDTAQYKGRSLADKMKELIPRQMFDVAIQAAIGGQVVARTTVKALRKNVIAKCYGGDVSRKKKLLEKQKAGKKRMKQVGRVEIPQEAFLAVLKVDS</sequence>
<organism>
    <name type="scientific">Saccharophagus degradans (strain 2-40 / ATCC 43961 / DSM 17024)</name>
    <dbReference type="NCBI Taxonomy" id="203122"/>
    <lineage>
        <taxon>Bacteria</taxon>
        <taxon>Pseudomonadati</taxon>
        <taxon>Pseudomonadota</taxon>
        <taxon>Gammaproteobacteria</taxon>
        <taxon>Cellvibrionales</taxon>
        <taxon>Cellvibrionaceae</taxon>
        <taxon>Saccharophagus</taxon>
    </lineage>
</organism>
<keyword id="KW-0997">Cell inner membrane</keyword>
<keyword id="KW-1003">Cell membrane</keyword>
<keyword id="KW-0342">GTP-binding</keyword>
<keyword id="KW-0378">Hydrolase</keyword>
<keyword id="KW-0472">Membrane</keyword>
<keyword id="KW-0547">Nucleotide-binding</keyword>
<keyword id="KW-0648">Protein biosynthesis</keyword>
<keyword id="KW-1185">Reference proteome</keyword>
<evidence type="ECO:0000255" key="1">
    <source>
        <dbReference type="HAMAP-Rule" id="MF_00071"/>
    </source>
</evidence>
<proteinExistence type="inferred from homology"/>
<name>LEPA_SACD2</name>
<feature type="chain" id="PRO_0000265699" description="Elongation factor 4">
    <location>
        <begin position="1"/>
        <end position="599"/>
    </location>
</feature>
<feature type="domain" description="tr-type G">
    <location>
        <begin position="5"/>
        <end position="187"/>
    </location>
</feature>
<feature type="binding site" evidence="1">
    <location>
        <begin position="17"/>
        <end position="22"/>
    </location>
    <ligand>
        <name>GTP</name>
        <dbReference type="ChEBI" id="CHEBI:37565"/>
    </ligand>
</feature>
<feature type="binding site" evidence="1">
    <location>
        <begin position="134"/>
        <end position="137"/>
    </location>
    <ligand>
        <name>GTP</name>
        <dbReference type="ChEBI" id="CHEBI:37565"/>
    </ligand>
</feature>
<reference key="1">
    <citation type="journal article" date="2008" name="PLoS Genet.">
        <title>Complete genome sequence of the complex carbohydrate-degrading marine bacterium, Saccharophagus degradans strain 2-40 T.</title>
        <authorList>
            <person name="Weiner R.M."/>
            <person name="Taylor L.E. II"/>
            <person name="Henrissat B."/>
            <person name="Hauser L."/>
            <person name="Land M."/>
            <person name="Coutinho P.M."/>
            <person name="Rancurel C."/>
            <person name="Saunders E.H."/>
            <person name="Longmire A.G."/>
            <person name="Zhang H."/>
            <person name="Bayer E.A."/>
            <person name="Gilbert H.J."/>
            <person name="Larimer F."/>
            <person name="Zhulin I.B."/>
            <person name="Ekborg N.A."/>
            <person name="Lamed R."/>
            <person name="Richardson P.M."/>
            <person name="Borovok I."/>
            <person name="Hutcheson S."/>
        </authorList>
    </citation>
    <scope>NUCLEOTIDE SEQUENCE [LARGE SCALE GENOMIC DNA]</scope>
    <source>
        <strain>2-40 / ATCC 43961 / DSM 17024</strain>
    </source>
</reference>
<gene>
    <name evidence="1" type="primary">lepA</name>
    <name type="ordered locus">Sde_2246</name>
</gene>